<reference key="1">
    <citation type="submission" date="2006-09" db="EMBL/GenBank/DDBJ databases">
        <authorList>
            <consortium name="The Klebsiella pneumonia Genome Sequencing Project"/>
            <person name="McClelland M."/>
            <person name="Sanderson E.K."/>
            <person name="Spieth J."/>
            <person name="Clifton W.S."/>
            <person name="Latreille P."/>
            <person name="Sabo A."/>
            <person name="Pepin K."/>
            <person name="Bhonagiri V."/>
            <person name="Porwollik S."/>
            <person name="Ali J."/>
            <person name="Wilson R.K."/>
        </authorList>
    </citation>
    <scope>NUCLEOTIDE SEQUENCE [LARGE SCALE GENOMIC DNA]</scope>
    <source>
        <strain>ATCC 700721 / MGH 78578</strain>
    </source>
</reference>
<accession>A6TEF4</accession>
<proteinExistence type="inferred from homology"/>
<dbReference type="EC" id="4.1.2.40" evidence="1"/>
<dbReference type="EMBL" id="CP000647">
    <property type="protein sequence ID" value="ABR78938.1"/>
    <property type="molecule type" value="Genomic_DNA"/>
</dbReference>
<dbReference type="RefSeq" id="WP_002917968.1">
    <property type="nucleotide sequence ID" value="NC_009648.1"/>
</dbReference>
<dbReference type="SMR" id="A6TEF4"/>
<dbReference type="STRING" id="272620.KPN_03543"/>
<dbReference type="PaxDb" id="272620-KPN_03543"/>
<dbReference type="EnsemblBacteria" id="ABR78938">
    <property type="protein sequence ID" value="ABR78938"/>
    <property type="gene ID" value="KPN_03543"/>
</dbReference>
<dbReference type="KEGG" id="kpn:KPN_03543"/>
<dbReference type="HOGENOM" id="CLU_040088_0_1_6"/>
<dbReference type="UniPathway" id="UPA00704">
    <property type="reaction ID" value="UER00716"/>
</dbReference>
<dbReference type="Proteomes" id="UP000000265">
    <property type="component" value="Chromosome"/>
</dbReference>
<dbReference type="GO" id="GO:0005829">
    <property type="term" value="C:cytosol"/>
    <property type="evidence" value="ECO:0007669"/>
    <property type="project" value="TreeGrafter"/>
</dbReference>
<dbReference type="GO" id="GO:0009025">
    <property type="term" value="F:tagatose-bisphosphate aldolase activity"/>
    <property type="evidence" value="ECO:0007669"/>
    <property type="project" value="UniProtKB-UniRule"/>
</dbReference>
<dbReference type="GO" id="GO:0008270">
    <property type="term" value="F:zinc ion binding"/>
    <property type="evidence" value="ECO:0007669"/>
    <property type="project" value="UniProtKB-UniRule"/>
</dbReference>
<dbReference type="GO" id="GO:2001059">
    <property type="term" value="P:D-tagatose 6-phosphate catabolic process"/>
    <property type="evidence" value="ECO:0007669"/>
    <property type="project" value="UniProtKB-UniRule"/>
</dbReference>
<dbReference type="GO" id="GO:0019404">
    <property type="term" value="P:galactitol catabolic process"/>
    <property type="evidence" value="ECO:0007669"/>
    <property type="project" value="InterPro"/>
</dbReference>
<dbReference type="CDD" id="cd00947">
    <property type="entry name" value="TBP_aldolase_IIB"/>
    <property type="match status" value="1"/>
</dbReference>
<dbReference type="FunFam" id="3.20.20.70:FF:000043">
    <property type="entry name" value="D-tagatose-1,6-bisphosphate aldolase subunit GatY"/>
    <property type="match status" value="1"/>
</dbReference>
<dbReference type="Gene3D" id="3.20.20.70">
    <property type="entry name" value="Aldolase class I"/>
    <property type="match status" value="1"/>
</dbReference>
<dbReference type="HAMAP" id="MF_01294">
    <property type="entry name" value="TagBP_aldolase_GatY"/>
    <property type="match status" value="1"/>
</dbReference>
<dbReference type="InterPro" id="IPR013785">
    <property type="entry name" value="Aldolase_TIM"/>
</dbReference>
<dbReference type="InterPro" id="IPR050246">
    <property type="entry name" value="Class_II_FBP_aldolase"/>
</dbReference>
<dbReference type="InterPro" id="IPR000771">
    <property type="entry name" value="FBA_II"/>
</dbReference>
<dbReference type="InterPro" id="IPR011288">
    <property type="entry name" value="TagBP_ald_KbaY/GatY"/>
</dbReference>
<dbReference type="InterPro" id="IPR023955">
    <property type="entry name" value="TagBP_aldolase_GatY"/>
</dbReference>
<dbReference type="NCBIfam" id="TIGR00167">
    <property type="entry name" value="cbbA"/>
    <property type="match status" value="1"/>
</dbReference>
<dbReference type="NCBIfam" id="NF006626">
    <property type="entry name" value="PRK09195.1"/>
    <property type="match status" value="1"/>
</dbReference>
<dbReference type="NCBIfam" id="NF009374">
    <property type="entry name" value="PRK12737.1"/>
    <property type="match status" value="1"/>
</dbReference>
<dbReference type="NCBIfam" id="TIGR01858">
    <property type="entry name" value="tag_bisphos_ald"/>
    <property type="match status" value="1"/>
</dbReference>
<dbReference type="PANTHER" id="PTHR30304">
    <property type="entry name" value="D-TAGATOSE-1,6-BISPHOSPHATE ALDOLASE"/>
    <property type="match status" value="1"/>
</dbReference>
<dbReference type="PANTHER" id="PTHR30304:SF0">
    <property type="entry name" value="D-TAGATOSE-1,6-BISPHOSPHATE ALDOLASE SUBUNIT GATY-RELATED"/>
    <property type="match status" value="1"/>
</dbReference>
<dbReference type="Pfam" id="PF01116">
    <property type="entry name" value="F_bP_aldolase"/>
    <property type="match status" value="1"/>
</dbReference>
<dbReference type="PIRSF" id="PIRSF001359">
    <property type="entry name" value="F_bP_aldolase_II"/>
    <property type="match status" value="1"/>
</dbReference>
<dbReference type="SUPFAM" id="SSF51569">
    <property type="entry name" value="Aldolase"/>
    <property type="match status" value="1"/>
</dbReference>
<dbReference type="PROSITE" id="PS00806">
    <property type="entry name" value="ALDOLASE_CLASS_II_2"/>
    <property type="match status" value="1"/>
</dbReference>
<name>GATY_KLEP7</name>
<feature type="chain" id="PRO_0000355342" description="D-tagatose-1,6-bisphosphate aldolase subunit GatY">
    <location>
        <begin position="1"/>
        <end position="284"/>
    </location>
</feature>
<feature type="active site" description="Proton donor" evidence="1">
    <location>
        <position position="82"/>
    </location>
</feature>
<feature type="binding site" evidence="1">
    <location>
        <position position="83"/>
    </location>
    <ligand>
        <name>Zn(2+)</name>
        <dbReference type="ChEBI" id="CHEBI:29105"/>
        <note>catalytic</note>
    </ligand>
</feature>
<feature type="binding site" evidence="1">
    <location>
        <position position="180"/>
    </location>
    <ligand>
        <name>Zn(2+)</name>
        <dbReference type="ChEBI" id="CHEBI:29105"/>
        <note>catalytic</note>
    </ligand>
</feature>
<feature type="binding site" evidence="1">
    <location>
        <position position="181"/>
    </location>
    <ligand>
        <name>dihydroxyacetone phosphate</name>
        <dbReference type="ChEBI" id="CHEBI:57642"/>
    </ligand>
</feature>
<feature type="binding site" evidence="1">
    <location>
        <position position="208"/>
    </location>
    <ligand>
        <name>Zn(2+)</name>
        <dbReference type="ChEBI" id="CHEBI:29105"/>
        <note>catalytic</note>
    </ligand>
</feature>
<feature type="binding site" evidence="1">
    <location>
        <begin position="209"/>
        <end position="211"/>
    </location>
    <ligand>
        <name>dihydroxyacetone phosphate</name>
        <dbReference type="ChEBI" id="CHEBI:57642"/>
    </ligand>
</feature>
<feature type="binding site" evidence="1">
    <location>
        <begin position="230"/>
        <end position="233"/>
    </location>
    <ligand>
        <name>dihydroxyacetone phosphate</name>
        <dbReference type="ChEBI" id="CHEBI:57642"/>
    </ligand>
</feature>
<keyword id="KW-0298">Galactitol metabolism</keyword>
<keyword id="KW-0456">Lyase</keyword>
<keyword id="KW-0479">Metal-binding</keyword>
<keyword id="KW-0862">Zinc</keyword>
<sequence length="284" mass="30823">MYIISSKNMLLKAQRQSYAVPAFNIHNLETMQVVVETAAELRSPLILAGTPGTYSYAGTGNVVAIARDLAKKWDLPLALHLDHHEDLADITRKVQAGIRSVMIDGSHSPFEENVALVKSVVELSHRYDASVEAELGRLGGVEDDLVVDAKDALYTNPEQAREFVARTGIDSLAVAIGTAHGLYTAEPKLDFERLAAIRDCVDVPLVLHGASGLPDSDIRRAISLGVCKVNVATELKIAFSDALKAYFLENPGANDPRHYMKPAKAAMKEVVRKVIHVCGCEGQL</sequence>
<protein>
    <recommendedName>
        <fullName evidence="1">D-tagatose-1,6-bisphosphate aldolase subunit GatY</fullName>
        <shortName evidence="1">TBPA</shortName>
        <shortName evidence="1">TagBP aldolase</shortName>
        <ecNumber evidence="1">4.1.2.40</ecNumber>
    </recommendedName>
    <alternativeName>
        <fullName evidence="1">D-tagatose-bisphosphate aldolase class II</fullName>
    </alternativeName>
    <alternativeName>
        <fullName evidence="1">Tagatose-bisphosphate aldolase</fullName>
    </alternativeName>
</protein>
<evidence type="ECO:0000255" key="1">
    <source>
        <dbReference type="HAMAP-Rule" id="MF_01294"/>
    </source>
</evidence>
<gene>
    <name evidence="1" type="primary">gatY</name>
    <name type="ordered locus">KPN78578_35140</name>
    <name type="ORF">KPN_03543</name>
</gene>
<comment type="function">
    <text evidence="1">Catalytic subunit of the tagatose-1,6-bisphosphate aldolase GatYZ, which catalyzes the reversible aldol condensation of dihydroxyacetone phosphate (DHAP or glycerone-phosphate) with glyceraldehyde 3-phosphate (G3P) to produce tagatose 1,6-bisphosphate (TBP). Requires GatZ subunit for full activity and stability. Is involved in the catabolism of galactitol.</text>
</comment>
<comment type="catalytic activity">
    <reaction evidence="1">
        <text>D-tagatofuranose 1,6-bisphosphate = D-glyceraldehyde 3-phosphate + dihydroxyacetone phosphate</text>
        <dbReference type="Rhea" id="RHEA:22948"/>
        <dbReference type="ChEBI" id="CHEBI:57642"/>
        <dbReference type="ChEBI" id="CHEBI:58694"/>
        <dbReference type="ChEBI" id="CHEBI:59776"/>
        <dbReference type="EC" id="4.1.2.40"/>
    </reaction>
</comment>
<comment type="cofactor">
    <cofactor evidence="1">
        <name>Zn(2+)</name>
        <dbReference type="ChEBI" id="CHEBI:29105"/>
    </cofactor>
    <text evidence="1">Binds 1 zinc ion per subunit.</text>
</comment>
<comment type="pathway">
    <text evidence="1">Carbohydrate metabolism; D-tagatose 6-phosphate degradation; D-glyceraldehyde 3-phosphate and glycerone phosphate from D-tagatose 6-phosphate: step 2/2.</text>
</comment>
<comment type="subunit">
    <text evidence="1">Forms a complex with GatZ.</text>
</comment>
<comment type="similarity">
    <text evidence="1">Belongs to the class II fructose-bisphosphate aldolase family. TagBP aldolase GatY subfamily.</text>
</comment>
<organism>
    <name type="scientific">Klebsiella pneumoniae subsp. pneumoniae (strain ATCC 700721 / MGH 78578)</name>
    <dbReference type="NCBI Taxonomy" id="272620"/>
    <lineage>
        <taxon>Bacteria</taxon>
        <taxon>Pseudomonadati</taxon>
        <taxon>Pseudomonadota</taxon>
        <taxon>Gammaproteobacteria</taxon>
        <taxon>Enterobacterales</taxon>
        <taxon>Enterobacteriaceae</taxon>
        <taxon>Klebsiella/Raoultella group</taxon>
        <taxon>Klebsiella</taxon>
        <taxon>Klebsiella pneumoniae complex</taxon>
    </lineage>
</organism>